<accession>B0RXM3</accession>
<feature type="chain" id="PRO_1000095001" description="Deoxyuridine 5'-triphosphate nucleotidohydrolase">
    <location>
        <begin position="1"/>
        <end position="152"/>
    </location>
</feature>
<feature type="binding site" evidence="1">
    <location>
        <begin position="71"/>
        <end position="73"/>
    </location>
    <ligand>
        <name>substrate</name>
    </ligand>
</feature>
<feature type="binding site" evidence="1">
    <location>
        <position position="84"/>
    </location>
    <ligand>
        <name>substrate</name>
    </ligand>
</feature>
<feature type="binding site" evidence="1">
    <location>
        <begin position="88"/>
        <end position="90"/>
    </location>
    <ligand>
        <name>substrate</name>
    </ligand>
</feature>
<proteinExistence type="inferred from homology"/>
<reference key="1">
    <citation type="journal article" date="2008" name="J. Biotechnol.">
        <title>The genome of Xanthomonas campestris pv. campestris B100 and its use for the reconstruction of metabolic pathways involved in xanthan biosynthesis.</title>
        <authorList>
            <person name="Vorhoelter F.-J."/>
            <person name="Schneiker S."/>
            <person name="Goesmann A."/>
            <person name="Krause L."/>
            <person name="Bekel T."/>
            <person name="Kaiser O."/>
            <person name="Linke B."/>
            <person name="Patschkowski T."/>
            <person name="Rueckert C."/>
            <person name="Schmid J."/>
            <person name="Sidhu V.K."/>
            <person name="Sieber V."/>
            <person name="Tauch A."/>
            <person name="Watt S.A."/>
            <person name="Weisshaar B."/>
            <person name="Becker A."/>
            <person name="Niehaus K."/>
            <person name="Puehler A."/>
        </authorList>
    </citation>
    <scope>NUCLEOTIDE SEQUENCE [LARGE SCALE GENOMIC DNA]</scope>
    <source>
        <strain>B100</strain>
    </source>
</reference>
<keyword id="KW-0378">Hydrolase</keyword>
<keyword id="KW-0460">Magnesium</keyword>
<keyword id="KW-0479">Metal-binding</keyword>
<keyword id="KW-0546">Nucleotide metabolism</keyword>
<evidence type="ECO:0000255" key="1">
    <source>
        <dbReference type="HAMAP-Rule" id="MF_00116"/>
    </source>
</evidence>
<dbReference type="EC" id="3.6.1.23" evidence="1"/>
<dbReference type="EMBL" id="AM920689">
    <property type="protein sequence ID" value="CAP53409.1"/>
    <property type="molecule type" value="Genomic_DNA"/>
</dbReference>
<dbReference type="SMR" id="B0RXM3"/>
<dbReference type="KEGG" id="xca:xcc-b100_4042"/>
<dbReference type="HOGENOM" id="CLU_068508_1_1_6"/>
<dbReference type="UniPathway" id="UPA00610">
    <property type="reaction ID" value="UER00666"/>
</dbReference>
<dbReference type="Proteomes" id="UP000001188">
    <property type="component" value="Chromosome"/>
</dbReference>
<dbReference type="GO" id="GO:0004170">
    <property type="term" value="F:dUTP diphosphatase activity"/>
    <property type="evidence" value="ECO:0007669"/>
    <property type="project" value="UniProtKB-UniRule"/>
</dbReference>
<dbReference type="GO" id="GO:0000287">
    <property type="term" value="F:magnesium ion binding"/>
    <property type="evidence" value="ECO:0007669"/>
    <property type="project" value="UniProtKB-UniRule"/>
</dbReference>
<dbReference type="GO" id="GO:0006226">
    <property type="term" value="P:dUMP biosynthetic process"/>
    <property type="evidence" value="ECO:0007669"/>
    <property type="project" value="UniProtKB-UniRule"/>
</dbReference>
<dbReference type="GO" id="GO:0046081">
    <property type="term" value="P:dUTP catabolic process"/>
    <property type="evidence" value="ECO:0007669"/>
    <property type="project" value="InterPro"/>
</dbReference>
<dbReference type="CDD" id="cd07557">
    <property type="entry name" value="trimeric_dUTPase"/>
    <property type="match status" value="1"/>
</dbReference>
<dbReference type="FunFam" id="2.70.40.10:FF:000002">
    <property type="entry name" value="dUTP diphosphatase"/>
    <property type="match status" value="1"/>
</dbReference>
<dbReference type="Gene3D" id="2.70.40.10">
    <property type="match status" value="1"/>
</dbReference>
<dbReference type="HAMAP" id="MF_00116">
    <property type="entry name" value="dUTPase_bact"/>
    <property type="match status" value="1"/>
</dbReference>
<dbReference type="InterPro" id="IPR008181">
    <property type="entry name" value="dUTPase"/>
</dbReference>
<dbReference type="InterPro" id="IPR029054">
    <property type="entry name" value="dUTPase-like"/>
</dbReference>
<dbReference type="InterPro" id="IPR036157">
    <property type="entry name" value="dUTPase-like_sf"/>
</dbReference>
<dbReference type="InterPro" id="IPR033704">
    <property type="entry name" value="dUTPase_trimeric"/>
</dbReference>
<dbReference type="NCBIfam" id="TIGR00576">
    <property type="entry name" value="dut"/>
    <property type="match status" value="1"/>
</dbReference>
<dbReference type="NCBIfam" id="NF001862">
    <property type="entry name" value="PRK00601.1"/>
    <property type="match status" value="1"/>
</dbReference>
<dbReference type="PANTHER" id="PTHR11241">
    <property type="entry name" value="DEOXYURIDINE 5'-TRIPHOSPHATE NUCLEOTIDOHYDROLASE"/>
    <property type="match status" value="1"/>
</dbReference>
<dbReference type="PANTHER" id="PTHR11241:SF0">
    <property type="entry name" value="DEOXYURIDINE 5'-TRIPHOSPHATE NUCLEOTIDOHYDROLASE"/>
    <property type="match status" value="1"/>
</dbReference>
<dbReference type="Pfam" id="PF00692">
    <property type="entry name" value="dUTPase"/>
    <property type="match status" value="1"/>
</dbReference>
<dbReference type="SUPFAM" id="SSF51283">
    <property type="entry name" value="dUTPase-like"/>
    <property type="match status" value="1"/>
</dbReference>
<name>DUT_XANCB</name>
<organism>
    <name type="scientific">Xanthomonas campestris pv. campestris (strain B100)</name>
    <dbReference type="NCBI Taxonomy" id="509169"/>
    <lineage>
        <taxon>Bacteria</taxon>
        <taxon>Pseudomonadati</taxon>
        <taxon>Pseudomonadota</taxon>
        <taxon>Gammaproteobacteria</taxon>
        <taxon>Lysobacterales</taxon>
        <taxon>Lysobacteraceae</taxon>
        <taxon>Xanthomonas</taxon>
    </lineage>
</organism>
<sequence>MTQSLQVKLLDPRFGDLWPLPAYATEASAGMDLRAALEAPMTLEPGDAALIPSGIAIHLDDPQVCAVILPRSGLGHRHGIVLGNGTGLIDADYQGPLLISTWNRGREAFTIEPGDRIAQLVILPIVRVSLQVVDTFVDSARGAGGFGHTGVR</sequence>
<comment type="function">
    <text evidence="1">This enzyme is involved in nucleotide metabolism: it produces dUMP, the immediate precursor of thymidine nucleotides and it decreases the intracellular concentration of dUTP so that uracil cannot be incorporated into DNA.</text>
</comment>
<comment type="catalytic activity">
    <reaction evidence="1">
        <text>dUTP + H2O = dUMP + diphosphate + H(+)</text>
        <dbReference type="Rhea" id="RHEA:10248"/>
        <dbReference type="ChEBI" id="CHEBI:15377"/>
        <dbReference type="ChEBI" id="CHEBI:15378"/>
        <dbReference type="ChEBI" id="CHEBI:33019"/>
        <dbReference type="ChEBI" id="CHEBI:61555"/>
        <dbReference type="ChEBI" id="CHEBI:246422"/>
        <dbReference type="EC" id="3.6.1.23"/>
    </reaction>
</comment>
<comment type="cofactor">
    <cofactor evidence="1">
        <name>Mg(2+)</name>
        <dbReference type="ChEBI" id="CHEBI:18420"/>
    </cofactor>
</comment>
<comment type="pathway">
    <text evidence="1">Pyrimidine metabolism; dUMP biosynthesis; dUMP from dCTP (dUTP route): step 2/2.</text>
</comment>
<comment type="similarity">
    <text evidence="1">Belongs to the dUTPase family.</text>
</comment>
<protein>
    <recommendedName>
        <fullName evidence="1">Deoxyuridine 5'-triphosphate nucleotidohydrolase</fullName>
        <shortName evidence="1">dUTPase</shortName>
        <ecNumber evidence="1">3.6.1.23</ecNumber>
    </recommendedName>
    <alternativeName>
        <fullName evidence="1">dUTP pyrophosphatase</fullName>
    </alternativeName>
</protein>
<gene>
    <name evidence="1" type="primary">dut</name>
    <name type="ordered locus">xcc-b100_4042</name>
</gene>